<dbReference type="EMBL" id="ABSV01001961">
    <property type="protein sequence ID" value="EDZ69834.1"/>
    <property type="molecule type" value="Genomic_DNA"/>
</dbReference>
<dbReference type="Proteomes" id="UP000008988">
    <property type="component" value="Unassembled WGS sequence"/>
</dbReference>
<dbReference type="GO" id="GO:0005737">
    <property type="term" value="C:cytoplasm"/>
    <property type="evidence" value="ECO:0007669"/>
    <property type="project" value="UniProtKB-SubCell"/>
</dbReference>
<dbReference type="GO" id="GO:0005634">
    <property type="term" value="C:nucleus"/>
    <property type="evidence" value="ECO:0007669"/>
    <property type="project" value="UniProtKB-SubCell"/>
</dbReference>
<dbReference type="InterPro" id="IPR039024">
    <property type="entry name" value="RTC4"/>
</dbReference>
<dbReference type="InterPro" id="IPR028094">
    <property type="entry name" value="RTC4_C"/>
</dbReference>
<dbReference type="PANTHER" id="PTHR41391">
    <property type="entry name" value="RESTRICTION OF TELOMERE CAPPING PROTEIN 4"/>
    <property type="match status" value="1"/>
</dbReference>
<dbReference type="PANTHER" id="PTHR41391:SF1">
    <property type="entry name" value="RESTRICTION OF TELOMERE CAPPING PROTEIN 4"/>
    <property type="match status" value="1"/>
</dbReference>
<dbReference type="Pfam" id="PF14474">
    <property type="entry name" value="RTC4"/>
    <property type="match status" value="1"/>
</dbReference>
<dbReference type="SMART" id="SM01312">
    <property type="entry name" value="RTC4"/>
    <property type="match status" value="1"/>
</dbReference>
<keyword id="KW-0963">Cytoplasm</keyword>
<keyword id="KW-0539">Nucleus</keyword>
<keyword id="KW-0597">Phosphoprotein</keyword>
<name>RTC4_YEAS6</name>
<gene>
    <name type="primary">RTC4</name>
    <name type="ORF">AWRI1631_140750</name>
</gene>
<sequence length="401" mass="46184">MVGPGLGINRVRRKGVYSTKKGSGDNLLLMKRQGKHDIHDRESDDLSGHDAFSPSKKRGKIDSITEDEIEVKKLSTVATFDKLSRSFPNSEVQAAKNAALRGKEKEEEKVVSIPLIQNLKNEDIESIKCRNNNLLDGKKLLLEAELSAVEDNQIFSSSFPEDKKLSLQSCLSSKEQIIKKLQVREEYMSKFKLPPMLFSDELLTEVEPFMPIVMDILEGKISSAYYFEAKNAFKNSQKAYLSVDEFRKLNLNKFTAGFYGLKRQLRVGEEIAKRYKRALTHNQPATLKWWGITDFCNYVLAPETLTSFCIYQLNLSNKSCSSKTPNKHPKQQLNEKEYYYDPELRMLAYDLLEDTVEYGIIVADSDPIEQWEAAIEEDRLRELKLDVHNYSSRRWRLDTHD</sequence>
<feature type="chain" id="PRO_0000408800" description="Restriction of telomere capping protein 4">
    <location>
        <begin position="1"/>
        <end position="401"/>
    </location>
</feature>
<feature type="region of interest" description="Disordered" evidence="3">
    <location>
        <begin position="35"/>
        <end position="59"/>
    </location>
</feature>
<feature type="compositionally biased region" description="Basic and acidic residues" evidence="3">
    <location>
        <begin position="35"/>
        <end position="48"/>
    </location>
</feature>
<feature type="modified residue" description="Phosphoserine" evidence="2">
    <location>
        <position position="23"/>
    </location>
</feature>
<accession>B5VQF5</accession>
<evidence type="ECO:0000250" key="1"/>
<evidence type="ECO:0000250" key="2">
    <source>
        <dbReference type="UniProtKB" id="P53850"/>
    </source>
</evidence>
<evidence type="ECO:0000256" key="3">
    <source>
        <dbReference type="SAM" id="MobiDB-lite"/>
    </source>
</evidence>
<evidence type="ECO:0000305" key="4"/>
<comment type="function">
    <text evidence="1">May be involved in a process influencing telomere capping.</text>
</comment>
<comment type="subcellular location">
    <subcellularLocation>
        <location evidence="1">Cytoplasm</location>
    </subcellularLocation>
    <subcellularLocation>
        <location evidence="1">Nucleus</location>
    </subcellularLocation>
</comment>
<comment type="similarity">
    <text evidence="4">Belongs to the RTC4 family.</text>
</comment>
<proteinExistence type="inferred from homology"/>
<protein>
    <recommendedName>
        <fullName>Restriction of telomere capping protein 4</fullName>
    </recommendedName>
</protein>
<organism>
    <name type="scientific">Saccharomyces cerevisiae (strain AWRI1631)</name>
    <name type="common">Baker's yeast</name>
    <dbReference type="NCBI Taxonomy" id="545124"/>
    <lineage>
        <taxon>Eukaryota</taxon>
        <taxon>Fungi</taxon>
        <taxon>Dikarya</taxon>
        <taxon>Ascomycota</taxon>
        <taxon>Saccharomycotina</taxon>
        <taxon>Saccharomycetes</taxon>
        <taxon>Saccharomycetales</taxon>
        <taxon>Saccharomycetaceae</taxon>
        <taxon>Saccharomyces</taxon>
    </lineage>
</organism>
<reference key="1">
    <citation type="journal article" date="2008" name="FEMS Yeast Res.">
        <title>Comparative genome analysis of a Saccharomyces cerevisiae wine strain.</title>
        <authorList>
            <person name="Borneman A.R."/>
            <person name="Forgan A.H."/>
            <person name="Pretorius I.S."/>
            <person name="Chambers P.J."/>
        </authorList>
    </citation>
    <scope>NUCLEOTIDE SEQUENCE [LARGE SCALE GENOMIC DNA]</scope>
    <source>
        <strain>AWRI1631</strain>
    </source>
</reference>